<feature type="signal peptide" evidence="1">
    <location>
        <begin position="1"/>
        <end position="23"/>
    </location>
</feature>
<feature type="chain" id="PRO_0000447901" description="Secreted RxLR effector protein 3">
    <location>
        <begin position="24"/>
        <end position="149"/>
    </location>
</feature>
<feature type="short sequence motif" description="RxLR-dEER" evidence="5">
    <location>
        <begin position="38"/>
        <end position="53"/>
    </location>
</feature>
<gene>
    <name evidence="3" type="primary">RXLR3</name>
</gene>
<protein>
    <recommendedName>
        <fullName evidence="3">Secreted RxLR effector protein 3</fullName>
    </recommendedName>
</protein>
<sequence>MRASTILFVLGAAILAVIGVTTALDSGEIDKSTQENHRLLRSGSMEQEPDEERKFIKVPSFMNKAAREAKKAKKKAEIANLVWLKLQKYSDSYALNYVDDMVKSGRSADDEIKFLKKHMKVSNNLQRVIEGHFRSHAELGRVLAKPKYK</sequence>
<comment type="function">
    <text evidence="2">Secreted effector that completely suppresses the host cell death induced by cell death-inducing proteins.</text>
</comment>
<comment type="subcellular location">
    <subcellularLocation>
        <location evidence="2">Secreted</location>
    </subcellularLocation>
    <subcellularLocation>
        <location evidence="2">Host nucleus</location>
    </subcellularLocation>
    <subcellularLocation>
        <location evidence="2">Host cytoplasm</location>
    </subcellularLocation>
</comment>
<comment type="domain">
    <text evidence="5">The RxLR-dEER motif acts to carry the protein into the host cell cytoplasm through binding to cell surface phosphatidylinositol-3-phosphate.</text>
</comment>
<comment type="similarity">
    <text evidence="4">Belongs to the RxLR effector family.</text>
</comment>
<accession>P0CU92</accession>
<organism>
    <name type="scientific">Plasmopara viticola</name>
    <name type="common">Downy mildew of grapevine</name>
    <name type="synonym">Botrytis viticola</name>
    <dbReference type="NCBI Taxonomy" id="143451"/>
    <lineage>
        <taxon>Eukaryota</taxon>
        <taxon>Sar</taxon>
        <taxon>Stramenopiles</taxon>
        <taxon>Oomycota</taxon>
        <taxon>Peronosporales</taxon>
        <taxon>Peronosporaceae</taxon>
        <taxon>Plasmopara</taxon>
    </lineage>
</organism>
<keyword id="KW-1035">Host cytoplasm</keyword>
<keyword id="KW-1048">Host nucleus</keyword>
<keyword id="KW-0964">Secreted</keyword>
<keyword id="KW-0732">Signal</keyword>
<keyword id="KW-0843">Virulence</keyword>
<dbReference type="GO" id="GO:0005576">
    <property type="term" value="C:extracellular region"/>
    <property type="evidence" value="ECO:0007669"/>
    <property type="project" value="UniProtKB-SubCell"/>
</dbReference>
<dbReference type="GO" id="GO:0030430">
    <property type="term" value="C:host cell cytoplasm"/>
    <property type="evidence" value="ECO:0007669"/>
    <property type="project" value="UniProtKB-SubCell"/>
</dbReference>
<dbReference type="GO" id="GO:0042025">
    <property type="term" value="C:host cell nucleus"/>
    <property type="evidence" value="ECO:0007669"/>
    <property type="project" value="UniProtKB-SubCell"/>
</dbReference>
<evidence type="ECO:0000255" key="1"/>
<evidence type="ECO:0000269" key="2">
    <source>
    </source>
</evidence>
<evidence type="ECO:0000303" key="3">
    <source>
    </source>
</evidence>
<evidence type="ECO:0000305" key="4"/>
<evidence type="ECO:0000305" key="5">
    <source>
    </source>
</evidence>
<reference key="1">
    <citation type="journal article" date="2018" name="Front. Plant Sci.">
        <title>In planta functional analysis and subcellular localization of the oomycete pathogen Plasmopara viticola candidate RXLR effector repertoire.</title>
        <authorList>
            <person name="Liu Y."/>
            <person name="Lan X."/>
            <person name="Song S."/>
            <person name="Yin L."/>
            <person name="Dry I.B."/>
            <person name="Qu J."/>
            <person name="Xiang J."/>
            <person name="Lu J."/>
        </authorList>
    </citation>
    <scope>NUCLEOTIDE SEQUENCE [MRNA]</scope>
    <scope>DOMAIN</scope>
    <scope>FUNCTION</scope>
    <scope>SUBCELLULAR LOCATION</scope>
</reference>
<proteinExistence type="evidence at transcript level"/>
<name>RLR3_PLAVT</name>